<organism>
    <name type="scientific">Escherichia coli (strain 55989 / EAEC)</name>
    <dbReference type="NCBI Taxonomy" id="585055"/>
    <lineage>
        <taxon>Bacteria</taxon>
        <taxon>Pseudomonadati</taxon>
        <taxon>Pseudomonadota</taxon>
        <taxon>Gammaproteobacteria</taxon>
        <taxon>Enterobacterales</taxon>
        <taxon>Enterobacteriaceae</taxon>
        <taxon>Escherichia</taxon>
    </lineage>
</organism>
<reference key="1">
    <citation type="journal article" date="2009" name="PLoS Genet.">
        <title>Organised genome dynamics in the Escherichia coli species results in highly diverse adaptive paths.</title>
        <authorList>
            <person name="Touchon M."/>
            <person name="Hoede C."/>
            <person name="Tenaillon O."/>
            <person name="Barbe V."/>
            <person name="Baeriswyl S."/>
            <person name="Bidet P."/>
            <person name="Bingen E."/>
            <person name="Bonacorsi S."/>
            <person name="Bouchier C."/>
            <person name="Bouvet O."/>
            <person name="Calteau A."/>
            <person name="Chiapello H."/>
            <person name="Clermont O."/>
            <person name="Cruveiller S."/>
            <person name="Danchin A."/>
            <person name="Diard M."/>
            <person name="Dossat C."/>
            <person name="Karoui M.E."/>
            <person name="Frapy E."/>
            <person name="Garry L."/>
            <person name="Ghigo J.M."/>
            <person name="Gilles A.M."/>
            <person name="Johnson J."/>
            <person name="Le Bouguenec C."/>
            <person name="Lescat M."/>
            <person name="Mangenot S."/>
            <person name="Martinez-Jehanne V."/>
            <person name="Matic I."/>
            <person name="Nassif X."/>
            <person name="Oztas S."/>
            <person name="Petit M.A."/>
            <person name="Pichon C."/>
            <person name="Rouy Z."/>
            <person name="Ruf C.S."/>
            <person name="Schneider D."/>
            <person name="Tourret J."/>
            <person name="Vacherie B."/>
            <person name="Vallenet D."/>
            <person name="Medigue C."/>
            <person name="Rocha E.P.C."/>
            <person name="Denamur E."/>
        </authorList>
    </citation>
    <scope>NUCLEOTIDE SEQUENCE [LARGE SCALE GENOMIC DNA]</scope>
    <source>
        <strain>55989 / EAEC</strain>
    </source>
</reference>
<dbReference type="EC" id="2.7.7.60" evidence="1"/>
<dbReference type="EMBL" id="CU928145">
    <property type="protein sequence ID" value="CAU98902.1"/>
    <property type="molecule type" value="Genomic_DNA"/>
</dbReference>
<dbReference type="RefSeq" id="WP_000246138.1">
    <property type="nucleotide sequence ID" value="NC_011748.1"/>
</dbReference>
<dbReference type="SMR" id="B7LEG5"/>
<dbReference type="GeneID" id="93779259"/>
<dbReference type="KEGG" id="eck:EC55989_3019"/>
<dbReference type="HOGENOM" id="CLU_061281_3_1_6"/>
<dbReference type="UniPathway" id="UPA00056">
    <property type="reaction ID" value="UER00093"/>
</dbReference>
<dbReference type="Proteomes" id="UP000000746">
    <property type="component" value="Chromosome"/>
</dbReference>
<dbReference type="GO" id="GO:0050518">
    <property type="term" value="F:2-C-methyl-D-erythritol 4-phosphate cytidylyltransferase activity"/>
    <property type="evidence" value="ECO:0007669"/>
    <property type="project" value="UniProtKB-UniRule"/>
</dbReference>
<dbReference type="GO" id="GO:0019288">
    <property type="term" value="P:isopentenyl diphosphate biosynthetic process, methylerythritol 4-phosphate pathway"/>
    <property type="evidence" value="ECO:0007669"/>
    <property type="project" value="UniProtKB-UniRule"/>
</dbReference>
<dbReference type="CDD" id="cd02516">
    <property type="entry name" value="CDP-ME_synthetase"/>
    <property type="match status" value="1"/>
</dbReference>
<dbReference type="FunFam" id="3.90.550.10:FF:000003">
    <property type="entry name" value="2-C-methyl-D-erythritol 4-phosphate cytidylyltransferase"/>
    <property type="match status" value="1"/>
</dbReference>
<dbReference type="Gene3D" id="3.90.550.10">
    <property type="entry name" value="Spore Coat Polysaccharide Biosynthesis Protein SpsA, Chain A"/>
    <property type="match status" value="1"/>
</dbReference>
<dbReference type="HAMAP" id="MF_00108">
    <property type="entry name" value="IspD"/>
    <property type="match status" value="1"/>
</dbReference>
<dbReference type="InterPro" id="IPR001228">
    <property type="entry name" value="IspD"/>
</dbReference>
<dbReference type="InterPro" id="IPR034683">
    <property type="entry name" value="IspD/TarI"/>
</dbReference>
<dbReference type="InterPro" id="IPR050088">
    <property type="entry name" value="IspD/TarI_cytidylyltransf_bact"/>
</dbReference>
<dbReference type="InterPro" id="IPR018294">
    <property type="entry name" value="ISPD_synthase_CS"/>
</dbReference>
<dbReference type="InterPro" id="IPR029044">
    <property type="entry name" value="Nucleotide-diphossugar_trans"/>
</dbReference>
<dbReference type="NCBIfam" id="TIGR00453">
    <property type="entry name" value="ispD"/>
    <property type="match status" value="1"/>
</dbReference>
<dbReference type="PANTHER" id="PTHR32125">
    <property type="entry name" value="2-C-METHYL-D-ERYTHRITOL 4-PHOSPHATE CYTIDYLYLTRANSFERASE, CHLOROPLASTIC"/>
    <property type="match status" value="1"/>
</dbReference>
<dbReference type="PANTHER" id="PTHR32125:SF4">
    <property type="entry name" value="2-C-METHYL-D-ERYTHRITOL 4-PHOSPHATE CYTIDYLYLTRANSFERASE, CHLOROPLASTIC"/>
    <property type="match status" value="1"/>
</dbReference>
<dbReference type="Pfam" id="PF01128">
    <property type="entry name" value="IspD"/>
    <property type="match status" value="1"/>
</dbReference>
<dbReference type="SUPFAM" id="SSF53448">
    <property type="entry name" value="Nucleotide-diphospho-sugar transferases"/>
    <property type="match status" value="1"/>
</dbReference>
<dbReference type="PROSITE" id="PS01295">
    <property type="entry name" value="ISPD"/>
    <property type="match status" value="1"/>
</dbReference>
<proteinExistence type="inferred from homology"/>
<sequence>MATTHLDVCAVVPAAGFGRRMQTECPKQYLSIGNQTILEHSVHALLAHPRVKRVVIAISPGDSRFAQLPLANHPQITVVDGGDERADSVLAGLKAAGDAQWVLVHDAARPCLHQDDLARLLALSETSRTGGILAAPVRDTMKRAEPGKNAIAHTVDRNGLWHALTPQFFPRELLHDCLTRALNEGATITDEASALEYCGFHPQLVEGRADNIKVTRPEDLALAEFYLTRTIHQENT</sequence>
<evidence type="ECO:0000255" key="1">
    <source>
        <dbReference type="HAMAP-Rule" id="MF_00108"/>
    </source>
</evidence>
<gene>
    <name evidence="1" type="primary">ispD</name>
    <name type="ordered locus">EC55989_3019</name>
</gene>
<feature type="chain" id="PRO_1000191055" description="2-C-methyl-D-erythritol 4-phosphate cytidylyltransferase">
    <location>
        <begin position="1"/>
        <end position="236"/>
    </location>
</feature>
<feature type="site" description="Transition state stabilizer" evidence="1">
    <location>
        <position position="20"/>
    </location>
</feature>
<feature type="site" description="Transition state stabilizer" evidence="1">
    <location>
        <position position="27"/>
    </location>
</feature>
<feature type="site" description="Positions MEP for the nucleophilic attack" evidence="1">
    <location>
        <position position="157"/>
    </location>
</feature>
<feature type="site" description="Positions MEP for the nucleophilic attack" evidence="1">
    <location>
        <position position="213"/>
    </location>
</feature>
<accession>B7LEG5</accession>
<name>ISPD_ECO55</name>
<keyword id="KW-0414">Isoprene biosynthesis</keyword>
<keyword id="KW-0548">Nucleotidyltransferase</keyword>
<keyword id="KW-1185">Reference proteome</keyword>
<keyword id="KW-0808">Transferase</keyword>
<protein>
    <recommendedName>
        <fullName evidence="1">2-C-methyl-D-erythritol 4-phosphate cytidylyltransferase</fullName>
        <ecNumber evidence="1">2.7.7.60</ecNumber>
    </recommendedName>
    <alternativeName>
        <fullName evidence="1">4-diphosphocytidyl-2C-methyl-D-erythritol synthase</fullName>
    </alternativeName>
    <alternativeName>
        <fullName evidence="1">MEP cytidylyltransferase</fullName>
        <shortName evidence="1">MCT</shortName>
    </alternativeName>
</protein>
<comment type="function">
    <text evidence="1">Catalyzes the formation of 4-diphosphocytidyl-2-C-methyl-D-erythritol from CTP and 2-C-methyl-D-erythritol 4-phosphate (MEP).</text>
</comment>
<comment type="catalytic activity">
    <reaction evidence="1">
        <text>2-C-methyl-D-erythritol 4-phosphate + CTP + H(+) = 4-CDP-2-C-methyl-D-erythritol + diphosphate</text>
        <dbReference type="Rhea" id="RHEA:13429"/>
        <dbReference type="ChEBI" id="CHEBI:15378"/>
        <dbReference type="ChEBI" id="CHEBI:33019"/>
        <dbReference type="ChEBI" id="CHEBI:37563"/>
        <dbReference type="ChEBI" id="CHEBI:57823"/>
        <dbReference type="ChEBI" id="CHEBI:58262"/>
        <dbReference type="EC" id="2.7.7.60"/>
    </reaction>
</comment>
<comment type="pathway">
    <text evidence="1">Isoprenoid biosynthesis; isopentenyl diphosphate biosynthesis via DXP pathway; isopentenyl diphosphate from 1-deoxy-D-xylulose 5-phosphate: step 2/6.</text>
</comment>
<comment type="subunit">
    <text evidence="1">Homodimer.</text>
</comment>
<comment type="similarity">
    <text evidence="1">Belongs to the IspD/TarI cytidylyltransferase family. IspD subfamily.</text>
</comment>